<keyword id="KW-0966">Cell projection</keyword>
<keyword id="KW-0472">Membrane</keyword>
<keyword id="KW-1185">Reference proteome</keyword>
<keyword id="KW-0812">Transmembrane</keyword>
<keyword id="KW-1133">Transmembrane helix</keyword>
<dbReference type="EMBL" id="BC142090">
    <property type="protein sequence ID" value="AAI42091.1"/>
    <property type="molecule type" value="mRNA"/>
</dbReference>
<dbReference type="RefSeq" id="NP_001092629.1">
    <property type="nucleotide sequence ID" value="NM_001099159.1"/>
</dbReference>
<dbReference type="SMR" id="A5PJF4"/>
<dbReference type="FunCoup" id="A5PJF4">
    <property type="interactions" value="1782"/>
</dbReference>
<dbReference type="STRING" id="9913.ENSBTAP00000030281"/>
<dbReference type="PaxDb" id="9913-ENSBTAP00000030281"/>
<dbReference type="Ensembl" id="ENSBTAT00000127321.1">
    <property type="protein sequence ID" value="ENSBTAP00000078362.1"/>
    <property type="gene ID" value="ENSBTAG00000056463.1"/>
</dbReference>
<dbReference type="GeneID" id="616789"/>
<dbReference type="KEGG" id="bta:616789"/>
<dbReference type="CTD" id="219854"/>
<dbReference type="VEuPathDB" id="HostDB:ENSBTAG00000022382"/>
<dbReference type="eggNOG" id="ENOG502S2I1">
    <property type="taxonomic scope" value="Eukaryota"/>
</dbReference>
<dbReference type="GeneTree" id="ENSGT00390000016247"/>
<dbReference type="HOGENOM" id="CLU_169774_0_0_1"/>
<dbReference type="InParanoid" id="A5PJF4"/>
<dbReference type="OMA" id="PATEMKI"/>
<dbReference type="OrthoDB" id="5978182at2759"/>
<dbReference type="TreeFam" id="TF328597"/>
<dbReference type="Proteomes" id="UP000009136">
    <property type="component" value="Chromosome 29"/>
</dbReference>
<dbReference type="Bgee" id="ENSBTAG00000022382">
    <property type="expression patterns" value="Expressed in pigment epithelium of eye and 103 other cell types or tissues"/>
</dbReference>
<dbReference type="GO" id="GO:0005929">
    <property type="term" value="C:cilium"/>
    <property type="evidence" value="ECO:0007669"/>
    <property type="project" value="UniProtKB-SubCell"/>
</dbReference>
<dbReference type="GO" id="GO:0016020">
    <property type="term" value="C:membrane"/>
    <property type="evidence" value="ECO:0007669"/>
    <property type="project" value="UniProtKB-SubCell"/>
</dbReference>
<dbReference type="InterPro" id="IPR026771">
    <property type="entry name" value="Tmem218"/>
</dbReference>
<dbReference type="PANTHER" id="PTHR31622">
    <property type="entry name" value="TRANSMEMBRANE PROTEIN 218"/>
    <property type="match status" value="1"/>
</dbReference>
<dbReference type="PANTHER" id="PTHR31622:SF1">
    <property type="entry name" value="TRANSMEMBRANE PROTEIN 218"/>
    <property type="match status" value="1"/>
</dbReference>
<feature type="chain" id="PRO_0000321835" description="Transmembrane protein 218">
    <location>
        <begin position="1"/>
        <end position="115"/>
    </location>
</feature>
<feature type="transmembrane region" description="Helical" evidence="3">
    <location>
        <begin position="10"/>
        <end position="30"/>
    </location>
</feature>
<feature type="transmembrane region" description="Helical" evidence="3">
    <location>
        <begin position="38"/>
        <end position="58"/>
    </location>
</feature>
<feature type="transmembrane region" description="Helical" evidence="3">
    <location>
        <begin position="81"/>
        <end position="101"/>
    </location>
</feature>
<comment type="function">
    <text evidence="2">May be involved in ciliary biogenesis or function.</text>
</comment>
<comment type="subunit">
    <text evidence="1">Interacts with TMEM67.</text>
</comment>
<comment type="subcellular location">
    <subcellularLocation>
        <location evidence="4">Membrane</location>
        <topology evidence="4">Multi-pass membrane protein</topology>
    </subcellularLocation>
    <subcellularLocation>
        <location evidence="2">Cell projection</location>
        <location evidence="2">Cilium</location>
    </subcellularLocation>
    <text evidence="2">Localizes at the transition zone, a region between the basal body and the ciliary axoneme.</text>
</comment>
<comment type="similarity">
    <text evidence="4">Belongs to the TMEM218 family.</text>
</comment>
<proteinExistence type="inferred from homology"/>
<gene>
    <name type="primary">TMEM218</name>
</gene>
<protein>
    <recommendedName>
        <fullName>Transmembrane protein 218</fullName>
    </recommendedName>
</protein>
<reference key="1">
    <citation type="submission" date="2007-06" db="EMBL/GenBank/DDBJ databases">
        <authorList>
            <consortium name="NIH - Mammalian Gene Collection (MGC) project"/>
        </authorList>
    </citation>
    <scope>NUCLEOTIDE SEQUENCE [LARGE SCALE MRNA]</scope>
    <source>
        <strain>Hereford</strain>
        <tissue>Hypothalamus</tissue>
    </source>
</reference>
<name>TM218_BOVIN</name>
<accession>A5PJF4</accession>
<organism>
    <name type="scientific">Bos taurus</name>
    <name type="common">Bovine</name>
    <dbReference type="NCBI Taxonomy" id="9913"/>
    <lineage>
        <taxon>Eukaryota</taxon>
        <taxon>Metazoa</taxon>
        <taxon>Chordata</taxon>
        <taxon>Craniata</taxon>
        <taxon>Vertebrata</taxon>
        <taxon>Euteleostomi</taxon>
        <taxon>Mammalia</taxon>
        <taxon>Eutheria</taxon>
        <taxon>Laurasiatheria</taxon>
        <taxon>Artiodactyla</taxon>
        <taxon>Ruminantia</taxon>
        <taxon>Pecora</taxon>
        <taxon>Bovidae</taxon>
        <taxon>Bovinae</taxon>
        <taxon>Bos</taxon>
    </lineage>
</organism>
<sequence>MAGTVLGVGAGVFVLALLWVSVLLLCALLFRASGAARFSVIFVFLGALIVTAILLLFPRASDAPAPEAETKIVDAFFIGRYVLLAFLTAVFLGSLFLVLIHHILEPIYAKPLRSY</sequence>
<evidence type="ECO:0000250" key="1">
    <source>
        <dbReference type="UniProtKB" id="A2RU14"/>
    </source>
</evidence>
<evidence type="ECO:0000250" key="2">
    <source>
        <dbReference type="UniProtKB" id="Q9CQ44"/>
    </source>
</evidence>
<evidence type="ECO:0000255" key="3"/>
<evidence type="ECO:0000305" key="4"/>